<proteinExistence type="inferred from homology"/>
<name>AIM41_KLULA</name>
<gene>
    <name type="primary">AIM41</name>
    <name type="ordered locus">KLLA0D06853g</name>
</gene>
<keyword id="KW-0496">Mitochondrion</keyword>
<keyword id="KW-1185">Reference proteome</keyword>
<keyword id="KW-0809">Transit peptide</keyword>
<comment type="subcellular location">
    <subcellularLocation>
        <location evidence="1">Mitochondrion</location>
    </subcellularLocation>
</comment>
<comment type="similarity">
    <text evidence="3">Belongs to the AIM41 family.</text>
</comment>
<accession>Q6CRS3</accession>
<reference key="1">
    <citation type="journal article" date="2004" name="Nature">
        <title>Genome evolution in yeasts.</title>
        <authorList>
            <person name="Dujon B."/>
            <person name="Sherman D."/>
            <person name="Fischer G."/>
            <person name="Durrens P."/>
            <person name="Casaregola S."/>
            <person name="Lafontaine I."/>
            <person name="de Montigny J."/>
            <person name="Marck C."/>
            <person name="Neuveglise C."/>
            <person name="Talla E."/>
            <person name="Goffard N."/>
            <person name="Frangeul L."/>
            <person name="Aigle M."/>
            <person name="Anthouard V."/>
            <person name="Babour A."/>
            <person name="Barbe V."/>
            <person name="Barnay S."/>
            <person name="Blanchin S."/>
            <person name="Beckerich J.-M."/>
            <person name="Beyne E."/>
            <person name="Bleykasten C."/>
            <person name="Boisrame A."/>
            <person name="Boyer J."/>
            <person name="Cattolico L."/>
            <person name="Confanioleri F."/>
            <person name="de Daruvar A."/>
            <person name="Despons L."/>
            <person name="Fabre E."/>
            <person name="Fairhead C."/>
            <person name="Ferry-Dumazet H."/>
            <person name="Groppi A."/>
            <person name="Hantraye F."/>
            <person name="Hennequin C."/>
            <person name="Jauniaux N."/>
            <person name="Joyet P."/>
            <person name="Kachouri R."/>
            <person name="Kerrest A."/>
            <person name="Koszul R."/>
            <person name="Lemaire M."/>
            <person name="Lesur I."/>
            <person name="Ma L."/>
            <person name="Muller H."/>
            <person name="Nicaud J.-M."/>
            <person name="Nikolski M."/>
            <person name="Oztas S."/>
            <person name="Ozier-Kalogeropoulos O."/>
            <person name="Pellenz S."/>
            <person name="Potier S."/>
            <person name="Richard G.-F."/>
            <person name="Straub M.-L."/>
            <person name="Suleau A."/>
            <person name="Swennen D."/>
            <person name="Tekaia F."/>
            <person name="Wesolowski-Louvel M."/>
            <person name="Westhof E."/>
            <person name="Wirth B."/>
            <person name="Zeniou-Meyer M."/>
            <person name="Zivanovic Y."/>
            <person name="Bolotin-Fukuhara M."/>
            <person name="Thierry A."/>
            <person name="Bouchier C."/>
            <person name="Caudron B."/>
            <person name="Scarpelli C."/>
            <person name="Gaillardin C."/>
            <person name="Weissenbach J."/>
            <person name="Wincker P."/>
            <person name="Souciet J.-L."/>
        </authorList>
    </citation>
    <scope>NUCLEOTIDE SEQUENCE [LARGE SCALE GENOMIC DNA]</scope>
    <source>
        <strain>ATCC 8585 / CBS 2359 / DSM 70799 / NBRC 1267 / NRRL Y-1140 / WM37</strain>
    </source>
</reference>
<sequence length="185" mass="20923">MLRCVIPSVRATATTRTFVRFASSQGYIDGIAALKQDLKKAMLAKDNLRKTTIRGVLSTIKNKEIDSKDKDLDEFVLYDVYAKLISQRKDSIAEFVKNKREDLVEKEANEIKILENYQTALPVASREEVDARVVQILTDLKESEPSIQLKQVFGKIDWKTLPGELKASPAAIRSSISSQFKKVFQ</sequence>
<protein>
    <recommendedName>
        <fullName>Altered inheritance of mitochondria protein 41, mitochondrial</fullName>
    </recommendedName>
</protein>
<dbReference type="EMBL" id="CR382124">
    <property type="protein sequence ID" value="CAH00462.1"/>
    <property type="molecule type" value="Genomic_DNA"/>
</dbReference>
<dbReference type="RefSeq" id="XP_453366.1">
    <property type="nucleotide sequence ID" value="XM_453366.1"/>
</dbReference>
<dbReference type="SMR" id="Q6CRS3"/>
<dbReference type="FunCoup" id="Q6CRS3">
    <property type="interactions" value="124"/>
</dbReference>
<dbReference type="STRING" id="284590.Q6CRS3"/>
<dbReference type="PaxDb" id="284590-Q6CRS3"/>
<dbReference type="KEGG" id="kla:KLLA0_D06853g"/>
<dbReference type="eggNOG" id="ENOG502RZX9">
    <property type="taxonomic scope" value="Eukaryota"/>
</dbReference>
<dbReference type="HOGENOM" id="CLU_123460_0_0_1"/>
<dbReference type="InParanoid" id="Q6CRS3"/>
<dbReference type="OMA" id="CIRTINS"/>
<dbReference type="Proteomes" id="UP000000598">
    <property type="component" value="Chromosome D"/>
</dbReference>
<dbReference type="GO" id="GO:0005739">
    <property type="term" value="C:mitochondrion"/>
    <property type="evidence" value="ECO:0007669"/>
    <property type="project" value="UniProtKB-SubCell"/>
</dbReference>
<dbReference type="GO" id="GO:0016884">
    <property type="term" value="F:carbon-nitrogen ligase activity, with glutamine as amido-N-donor"/>
    <property type="evidence" value="ECO:0007669"/>
    <property type="project" value="InterPro"/>
</dbReference>
<dbReference type="Gene3D" id="1.10.1510.10">
    <property type="entry name" value="Uncharacterised protein YqeY/AIM41 PF09424, N-terminal domain"/>
    <property type="match status" value="1"/>
</dbReference>
<dbReference type="InterPro" id="IPR003789">
    <property type="entry name" value="Asn/Gln_tRNA_amidoTrase-B-like"/>
</dbReference>
<dbReference type="InterPro" id="IPR019004">
    <property type="entry name" value="YqeY/Aim41"/>
</dbReference>
<dbReference type="InterPro" id="IPR042184">
    <property type="entry name" value="YqeY/Aim41_N"/>
</dbReference>
<dbReference type="PANTHER" id="PTHR28055">
    <property type="entry name" value="ALTERED INHERITANCE OF MITOCHONDRIA PROTEIN 41, MITOCHONDRIAL"/>
    <property type="match status" value="1"/>
</dbReference>
<dbReference type="PANTHER" id="PTHR28055:SF1">
    <property type="entry name" value="ALTERED INHERITANCE OF MITOCHONDRIA PROTEIN 41, MITOCHONDRIAL"/>
    <property type="match status" value="1"/>
</dbReference>
<dbReference type="Pfam" id="PF09424">
    <property type="entry name" value="YqeY"/>
    <property type="match status" value="1"/>
</dbReference>
<dbReference type="SUPFAM" id="SSF89095">
    <property type="entry name" value="GatB/YqeY motif"/>
    <property type="match status" value="1"/>
</dbReference>
<evidence type="ECO:0000250" key="1"/>
<evidence type="ECO:0000255" key="2"/>
<evidence type="ECO:0000305" key="3"/>
<feature type="transit peptide" description="Mitochondrion" evidence="2">
    <location>
        <begin position="1"/>
        <end position="21"/>
    </location>
</feature>
<feature type="chain" id="PRO_0000399865" description="Altered inheritance of mitochondria protein 41, mitochondrial">
    <location>
        <begin position="22"/>
        <end position="185"/>
    </location>
</feature>
<organism>
    <name type="scientific">Kluyveromyces lactis (strain ATCC 8585 / CBS 2359 / DSM 70799 / NBRC 1267 / NRRL Y-1140 / WM37)</name>
    <name type="common">Yeast</name>
    <name type="synonym">Candida sphaerica</name>
    <dbReference type="NCBI Taxonomy" id="284590"/>
    <lineage>
        <taxon>Eukaryota</taxon>
        <taxon>Fungi</taxon>
        <taxon>Dikarya</taxon>
        <taxon>Ascomycota</taxon>
        <taxon>Saccharomycotina</taxon>
        <taxon>Saccharomycetes</taxon>
        <taxon>Saccharomycetales</taxon>
        <taxon>Saccharomycetaceae</taxon>
        <taxon>Kluyveromyces</taxon>
    </lineage>
</organism>